<comment type="function">
    <text>Catalyzes the first step of the osmoprotectant glycine betaine synthesis.</text>
</comment>
<comment type="catalytic activity">
    <reaction>
        <text>choline + 2 reduced [2Fe-2S]-[ferredoxin] + O2 + 2 H(+) = betaine aldehyde hydrate + 2 oxidized [2Fe-2S]-[ferredoxin] + H2O</text>
        <dbReference type="Rhea" id="RHEA:17769"/>
        <dbReference type="Rhea" id="RHEA-COMP:10000"/>
        <dbReference type="Rhea" id="RHEA-COMP:10001"/>
        <dbReference type="ChEBI" id="CHEBI:15354"/>
        <dbReference type="ChEBI" id="CHEBI:15377"/>
        <dbReference type="ChEBI" id="CHEBI:15378"/>
        <dbReference type="ChEBI" id="CHEBI:15379"/>
        <dbReference type="ChEBI" id="CHEBI:15870"/>
        <dbReference type="ChEBI" id="CHEBI:33737"/>
        <dbReference type="ChEBI" id="CHEBI:33738"/>
        <dbReference type="EC" id="1.14.15.7"/>
    </reaction>
</comment>
<comment type="cofactor">
    <cofactor>
        <name>[2Fe-2S] cluster</name>
        <dbReference type="ChEBI" id="CHEBI:190135"/>
    </cofactor>
    <text>Binds 1 [2Fe-2S] cluster.</text>
</comment>
<comment type="cofactor">
    <cofactor evidence="4">
        <name>Fe cation</name>
        <dbReference type="ChEBI" id="CHEBI:24875"/>
    </cofactor>
    <text evidence="4">Binds 1 Fe cation.</text>
</comment>
<comment type="cofactor">
    <cofactor evidence="1">
        <name>Mg(2+)</name>
        <dbReference type="ChEBI" id="CHEBI:18420"/>
    </cofactor>
</comment>
<comment type="pathway">
    <text>Amine and polyamine biosynthesis; betaine biosynthesis via choline pathway; betaine aldehyde from choline (monooxygenase route): step 1/1.</text>
</comment>
<comment type="subcellular location">
    <subcellularLocation>
        <location evidence="1">Plastid</location>
        <location evidence="1">Chloroplast stroma</location>
    </subcellularLocation>
</comment>
<comment type="tissue specificity">
    <text>Expressed in roots and leaves.</text>
</comment>
<comment type="induction">
    <text>By salt and drought stress.</text>
</comment>
<comment type="similarity">
    <text evidence="4">Belongs to the choline monooxygenase family.</text>
</comment>
<accession>O22553</accession>
<proteinExistence type="evidence at transcript level"/>
<name>CHMO_BETVU</name>
<protein>
    <recommendedName>
        <fullName>Choline monooxygenase, chloroplastic</fullName>
        <ecNumber>1.14.15.7</ecNumber>
    </recommendedName>
</protein>
<keyword id="KW-0001">2Fe-2S</keyword>
<keyword id="KW-0150">Chloroplast</keyword>
<keyword id="KW-0408">Iron</keyword>
<keyword id="KW-0411">Iron-sulfur</keyword>
<keyword id="KW-0460">Magnesium</keyword>
<keyword id="KW-0479">Metal-binding</keyword>
<keyword id="KW-0503">Monooxygenase</keyword>
<keyword id="KW-0560">Oxidoreductase</keyword>
<keyword id="KW-0934">Plastid</keyword>
<keyword id="KW-0346">Stress response</keyword>
<keyword id="KW-0809">Transit peptide</keyword>
<feature type="transit peptide" description="Chloroplast" evidence="1">
    <location>
        <begin position="1"/>
        <end position="65"/>
    </location>
</feature>
<feature type="chain" id="PRO_0000020927" description="Choline monooxygenase, chloroplastic">
    <location>
        <begin position="66"/>
        <end position="446"/>
    </location>
</feature>
<feature type="domain" description="Rieske" evidence="3">
    <location>
        <begin position="127"/>
        <end position="234"/>
    </location>
</feature>
<feature type="binding site" evidence="3">
    <location>
        <position position="169"/>
    </location>
    <ligand>
        <name>[2Fe-2S] cluster</name>
        <dbReference type="ChEBI" id="CHEBI:190135"/>
    </ligand>
</feature>
<feature type="binding site" evidence="3">
    <location>
        <position position="171"/>
    </location>
    <ligand>
        <name>[2Fe-2S] cluster</name>
        <dbReference type="ChEBI" id="CHEBI:190135"/>
    </ligand>
</feature>
<feature type="binding site" evidence="3">
    <location>
        <position position="188"/>
    </location>
    <ligand>
        <name>[2Fe-2S] cluster</name>
        <dbReference type="ChEBI" id="CHEBI:190135"/>
    </ligand>
</feature>
<feature type="binding site" evidence="3">
    <location>
        <position position="191"/>
    </location>
    <ligand>
        <name>[2Fe-2S] cluster</name>
        <dbReference type="ChEBI" id="CHEBI:190135"/>
    </ligand>
</feature>
<feature type="binding site" evidence="2">
    <location>
        <position position="294"/>
    </location>
    <ligand>
        <name>Fe cation</name>
        <dbReference type="ChEBI" id="CHEBI:24875"/>
    </ligand>
</feature>
<feature type="binding site" evidence="2">
    <location>
        <position position="299"/>
    </location>
    <ligand>
        <name>Fe cation</name>
        <dbReference type="ChEBI" id="CHEBI:24875"/>
    </ligand>
</feature>
<reference key="1">
    <citation type="journal article" date="1998" name="Plant Physiol.">
        <title>Osmotic stress induces expression of choline monooxygenase in sugar beet and amaranth.</title>
        <authorList>
            <person name="Russell B.L."/>
            <person name="Rathinasabapathi B."/>
            <person name="Hanson A.D."/>
        </authorList>
    </citation>
    <scope>NUCLEOTIDE SEQUENCE [MRNA]</scope>
    <source>
        <strain>cv. Great Western D-2</strain>
        <tissue>Leaf</tissue>
    </source>
</reference>
<evidence type="ECO:0000250" key="1"/>
<evidence type="ECO:0000255" key="2"/>
<evidence type="ECO:0000255" key="3">
    <source>
        <dbReference type="PROSITE-ProRule" id="PRU00628"/>
    </source>
</evidence>
<evidence type="ECO:0000305" key="4"/>
<organism>
    <name type="scientific">Beta vulgaris</name>
    <name type="common">Sugar beet</name>
    <dbReference type="NCBI Taxonomy" id="161934"/>
    <lineage>
        <taxon>Eukaryota</taxon>
        <taxon>Viridiplantae</taxon>
        <taxon>Streptophyta</taxon>
        <taxon>Embryophyta</taxon>
        <taxon>Tracheophyta</taxon>
        <taxon>Spermatophyta</taxon>
        <taxon>Magnoliopsida</taxon>
        <taxon>eudicotyledons</taxon>
        <taxon>Gunneridae</taxon>
        <taxon>Pentapetalae</taxon>
        <taxon>Caryophyllales</taxon>
        <taxon>Chenopodiaceae</taxon>
        <taxon>Betoideae</taxon>
        <taxon>Beta</taxon>
    </lineage>
</organism>
<sequence length="446" mass="50219">MAASATTMLLKYPTLCAMPNSSSSSNNNDLPTSIPLNNNNNLLSNKNKILQTPNINTSTNKIITKAVASPVFPTLKTTSNTPSSIRSLVHEFDPEIPPEDALTPPSTWYTEPAFYSHELERIFYKGWQVAGYSEQVKEKNQYFTGSLGNVEYLVSRDGQGELHAFHNVCTHRASILACGSGKKSCFVCPYHGWVYGLDGSLAKASKATETQNLDPKELGLAPLKVAEWGPFILISLDRSLDANADVGTEWIGKSAEDVKAHAFDPNLKFTHRSEFPMECNWKVFCDNYLDSSYHVPYAHKYYAAELDFDTYNTEMIEKCVIQRVGSSSNKPDGFDRLGTEAFYAFIYPNFAVERYGTWMTTMHVVPMGQRKCKLVVDYYLEKAMLDDKAYIDKGIAINDNVQKEDKVLCESVQRGLETPAYRSGRYVMPIEKGIHHFHCWLHETLQ</sequence>
<dbReference type="EC" id="1.14.15.7"/>
<dbReference type="EMBL" id="AF023132">
    <property type="protein sequence ID" value="AAB80954.1"/>
    <property type="molecule type" value="mRNA"/>
</dbReference>
<dbReference type="PIR" id="T14542">
    <property type="entry name" value="T14542"/>
</dbReference>
<dbReference type="SMR" id="O22553"/>
<dbReference type="OMA" id="FSRRWLF"/>
<dbReference type="BRENDA" id="1.14.15.7">
    <property type="organism ID" value="836"/>
</dbReference>
<dbReference type="UniPathway" id="UPA00529">
    <property type="reaction ID" value="UER00430"/>
</dbReference>
<dbReference type="GO" id="GO:0009570">
    <property type="term" value="C:chloroplast stroma"/>
    <property type="evidence" value="ECO:0007669"/>
    <property type="project" value="UniProtKB-SubCell"/>
</dbReference>
<dbReference type="GO" id="GO:0051537">
    <property type="term" value="F:2 iron, 2 sulfur cluster binding"/>
    <property type="evidence" value="ECO:0007669"/>
    <property type="project" value="UniProtKB-KW"/>
</dbReference>
<dbReference type="GO" id="GO:0019133">
    <property type="term" value="F:choline monooxygenase activity"/>
    <property type="evidence" value="ECO:0007669"/>
    <property type="project" value="UniProtKB-EC"/>
</dbReference>
<dbReference type="GO" id="GO:0005506">
    <property type="term" value="F:iron ion binding"/>
    <property type="evidence" value="ECO:0007669"/>
    <property type="project" value="InterPro"/>
</dbReference>
<dbReference type="GO" id="GO:0019285">
    <property type="term" value="P:glycine betaine biosynthetic process from choline"/>
    <property type="evidence" value="ECO:0007669"/>
    <property type="project" value="UniProtKB-UniPathway"/>
</dbReference>
<dbReference type="CDD" id="cd08883">
    <property type="entry name" value="RHO_alpha_C_CMO-like"/>
    <property type="match status" value="1"/>
</dbReference>
<dbReference type="CDD" id="cd03541">
    <property type="entry name" value="Rieske_RO_Alpha_CMO"/>
    <property type="match status" value="1"/>
</dbReference>
<dbReference type="Gene3D" id="3.90.380.10">
    <property type="entry name" value="Naphthalene 1,2-dioxygenase Alpha Subunit, Chain A, domain 1"/>
    <property type="match status" value="2"/>
</dbReference>
<dbReference type="Gene3D" id="2.102.10.10">
    <property type="entry name" value="Rieske [2Fe-2S] iron-sulphur domain"/>
    <property type="match status" value="1"/>
</dbReference>
<dbReference type="InterPro" id="IPR017941">
    <property type="entry name" value="Rieske_2Fe-2S"/>
</dbReference>
<dbReference type="InterPro" id="IPR036922">
    <property type="entry name" value="Rieske_2Fe-2S_sf"/>
</dbReference>
<dbReference type="InterPro" id="IPR015879">
    <property type="entry name" value="Ring_hydroxy_dOase_asu_C_dom"/>
</dbReference>
<dbReference type="InterPro" id="IPR001663">
    <property type="entry name" value="Rng_hydr_dOase-A"/>
</dbReference>
<dbReference type="PANTHER" id="PTHR43756">
    <property type="entry name" value="CHOLINE MONOOXYGENASE, CHLOROPLASTIC"/>
    <property type="match status" value="1"/>
</dbReference>
<dbReference type="PANTHER" id="PTHR43756:SF5">
    <property type="entry name" value="CHOLINE MONOOXYGENASE, CHLOROPLASTIC"/>
    <property type="match status" value="1"/>
</dbReference>
<dbReference type="Pfam" id="PF00355">
    <property type="entry name" value="Rieske"/>
    <property type="match status" value="1"/>
</dbReference>
<dbReference type="Pfam" id="PF00848">
    <property type="entry name" value="Ring_hydroxyl_A"/>
    <property type="match status" value="1"/>
</dbReference>
<dbReference type="PRINTS" id="PR00090">
    <property type="entry name" value="RNGDIOXGNASE"/>
</dbReference>
<dbReference type="SUPFAM" id="SSF55961">
    <property type="entry name" value="Bet v1-like"/>
    <property type="match status" value="1"/>
</dbReference>
<dbReference type="SUPFAM" id="SSF50022">
    <property type="entry name" value="ISP domain"/>
    <property type="match status" value="1"/>
</dbReference>
<dbReference type="PROSITE" id="PS51296">
    <property type="entry name" value="RIESKE"/>
    <property type="match status" value="1"/>
</dbReference>
<gene>
    <name type="primary">CMO</name>
</gene>